<keyword id="KW-0217">Developmental protein</keyword>
<keyword id="KW-0238">DNA-binding</keyword>
<keyword id="KW-0539">Nucleus</keyword>
<keyword id="KW-0563">Paired box</keyword>
<keyword id="KW-0804">Transcription</keyword>
<keyword id="KW-0805">Transcription regulation</keyword>
<sequence>MEPAFGEVNQLGGVFVNGRPLPNAIRLRIVELAQLGIRPCDISRQLRVSHGCVSKILARYNETGSILPGAIGGSKPRVTTPTVVKHIRTYKQRDPGIFAWEIRDRLLADGVCDKYNVPSVSSISRILRNKIGNLAQQGHYDSYKQHQPAPQPALPYNHIYSYPSPITAAAAKVPTPPGVPAIPGSVAMPRTWPSSHSVTDILGIRSITDQVSDSSPYHSPKVEEWSSLGRNNFPAAAPHAVNGLEKGALEQETKYSQAPNGLPAVGSFVSASSMAPYPTPAQVSPYMTYSAAPSGYVAGHGWQHAGSTPLSPHNCDIPASLAFKGMQAAREGSHSVTASAL</sequence>
<gene>
    <name type="primary">PAX9</name>
</gene>
<protein>
    <recommendedName>
        <fullName>Paired box protein Pax-9</fullName>
    </recommendedName>
</protein>
<comment type="function">
    <text evidence="1">Transcription factor required for normal development of thymus, parathyroid glands, ultimobranchial bodies, teeth, skeletal elements of skull and larynx as well as distal limbs.</text>
</comment>
<comment type="subunit">
    <text evidence="1">Interacts with KDM5B.</text>
</comment>
<comment type="subcellular location">
    <subcellularLocation>
        <location>Nucleus</location>
    </subcellularLocation>
</comment>
<name>PAX9_LEORO</name>
<feature type="chain" id="PRO_0000050205" description="Paired box protein Pax-9">
    <location>
        <begin position="1"/>
        <end position="341"/>
    </location>
</feature>
<feature type="DNA-binding region" description="Paired" evidence="2">
    <location>
        <begin position="4"/>
        <end position="130"/>
    </location>
</feature>
<feature type="region of interest" description="PAI subdomain" evidence="2">
    <location>
        <begin position="7"/>
        <end position="63"/>
    </location>
</feature>
<feature type="region of interest" description="RED subdomain" evidence="2">
    <location>
        <begin position="82"/>
        <end position="130"/>
    </location>
</feature>
<feature type="region of interest" description="Interaction with KDM5B" evidence="1">
    <location>
        <begin position="168"/>
        <end position="189"/>
    </location>
</feature>
<accession>Q2VL57</accession>
<reference key="1">
    <citation type="journal article" date="2006" name="Mol. Biol. Evol.">
        <title>Molecular evolution of the primate developmental genes MSX1 and PAX9.</title>
        <authorList>
            <person name="Perry G.H."/>
            <person name="Verrelli B.C."/>
            <person name="Stone A.C."/>
        </authorList>
    </citation>
    <scope>NUCLEOTIDE SEQUENCE [GENOMIC DNA]</scope>
    <source>
        <strain>Isolate PR00786</strain>
    </source>
</reference>
<organism>
    <name type="scientific">Leontopithecus rosalia</name>
    <name type="common">Golden lion tamarin</name>
    <dbReference type="NCBI Taxonomy" id="30588"/>
    <lineage>
        <taxon>Eukaryota</taxon>
        <taxon>Metazoa</taxon>
        <taxon>Chordata</taxon>
        <taxon>Craniata</taxon>
        <taxon>Vertebrata</taxon>
        <taxon>Euteleostomi</taxon>
        <taxon>Mammalia</taxon>
        <taxon>Eutheria</taxon>
        <taxon>Euarchontoglires</taxon>
        <taxon>Primates</taxon>
        <taxon>Haplorrhini</taxon>
        <taxon>Platyrrhini</taxon>
        <taxon>Cebidae</taxon>
        <taxon>Callitrichinae</taxon>
        <taxon>Leontopithecus</taxon>
    </lineage>
</organism>
<evidence type="ECO:0000250" key="1"/>
<evidence type="ECO:0000255" key="2">
    <source>
        <dbReference type="PROSITE-ProRule" id="PRU00381"/>
    </source>
</evidence>
<dbReference type="EMBL" id="DQ067522">
    <property type="protein sequence ID" value="AAZ39859.1"/>
    <property type="molecule type" value="Genomic_DNA"/>
</dbReference>
<dbReference type="EMBL" id="DQ067520">
    <property type="protein sequence ID" value="AAZ39859.1"/>
    <property type="status" value="JOINED"/>
    <property type="molecule type" value="Genomic_DNA"/>
</dbReference>
<dbReference type="EMBL" id="DQ067521">
    <property type="protein sequence ID" value="AAZ39859.1"/>
    <property type="status" value="JOINED"/>
    <property type="molecule type" value="Genomic_DNA"/>
</dbReference>
<dbReference type="SMR" id="Q2VL57"/>
<dbReference type="GO" id="GO:0005634">
    <property type="term" value="C:nucleus"/>
    <property type="evidence" value="ECO:0007669"/>
    <property type="project" value="UniProtKB-SubCell"/>
</dbReference>
<dbReference type="GO" id="GO:0000981">
    <property type="term" value="F:DNA-binding transcription factor activity, RNA polymerase II-specific"/>
    <property type="evidence" value="ECO:0007669"/>
    <property type="project" value="TreeGrafter"/>
</dbReference>
<dbReference type="GO" id="GO:0000978">
    <property type="term" value="F:RNA polymerase II cis-regulatory region sequence-specific DNA binding"/>
    <property type="evidence" value="ECO:0007669"/>
    <property type="project" value="TreeGrafter"/>
</dbReference>
<dbReference type="CDD" id="cd00131">
    <property type="entry name" value="PAX"/>
    <property type="match status" value="1"/>
</dbReference>
<dbReference type="FunFam" id="1.10.10.10:FF:000003">
    <property type="entry name" value="Paired box protein Pax-6"/>
    <property type="match status" value="1"/>
</dbReference>
<dbReference type="FunFam" id="1.10.10.10:FF:000084">
    <property type="entry name" value="paired box protein Pax-9"/>
    <property type="match status" value="1"/>
</dbReference>
<dbReference type="Gene3D" id="1.10.10.10">
    <property type="entry name" value="Winged helix-like DNA-binding domain superfamily/Winged helix DNA-binding domain"/>
    <property type="match status" value="2"/>
</dbReference>
<dbReference type="InterPro" id="IPR009057">
    <property type="entry name" value="Homeodomain-like_sf"/>
</dbReference>
<dbReference type="InterPro" id="IPR043182">
    <property type="entry name" value="PAIRED_DNA-bd_dom"/>
</dbReference>
<dbReference type="InterPro" id="IPR001523">
    <property type="entry name" value="Paired_dom"/>
</dbReference>
<dbReference type="InterPro" id="IPR043565">
    <property type="entry name" value="PAX_fam"/>
</dbReference>
<dbReference type="InterPro" id="IPR036388">
    <property type="entry name" value="WH-like_DNA-bd_sf"/>
</dbReference>
<dbReference type="PANTHER" id="PTHR45636">
    <property type="entry name" value="PAIRED BOX PROTEIN PAX-6-RELATED-RELATED"/>
    <property type="match status" value="1"/>
</dbReference>
<dbReference type="PANTHER" id="PTHR45636:SF13">
    <property type="entry name" value="PAIRED BOX PROTEIN PAX-9"/>
    <property type="match status" value="1"/>
</dbReference>
<dbReference type="Pfam" id="PF00292">
    <property type="entry name" value="PAX"/>
    <property type="match status" value="1"/>
</dbReference>
<dbReference type="PRINTS" id="PR00027">
    <property type="entry name" value="PAIREDBOX"/>
</dbReference>
<dbReference type="SMART" id="SM00351">
    <property type="entry name" value="PAX"/>
    <property type="match status" value="1"/>
</dbReference>
<dbReference type="SUPFAM" id="SSF46689">
    <property type="entry name" value="Homeodomain-like"/>
    <property type="match status" value="1"/>
</dbReference>
<dbReference type="PROSITE" id="PS00034">
    <property type="entry name" value="PAIRED_1"/>
    <property type="match status" value="1"/>
</dbReference>
<dbReference type="PROSITE" id="PS51057">
    <property type="entry name" value="PAIRED_2"/>
    <property type="match status" value="1"/>
</dbReference>
<proteinExistence type="inferred from homology"/>